<reference key="1">
    <citation type="journal article" date="1992" name="Science">
        <title>Carnivorous plants: phylogeny and structural evolution.</title>
        <authorList>
            <person name="Albert V.A."/>
            <person name="Williams S.E."/>
            <person name="Chase M.W."/>
        </authorList>
    </citation>
    <scope>NUCLEOTIDE SEQUENCE [GENOMIC DNA]</scope>
</reference>
<sequence>MSPQTETKASVGFKAGVKDYKLTYYTPDYETKDTDILAAFRVTPQPGVPPEEAGAAVAAESSTGTWTTVWTDGLTSLDRYKGRCYGIEPVLGEENQYIAYVAYPLDLFEEGSVTNMFTSIVGNVFGFKALRALRLEDLRIPTAYVKTFQGPPHGIQVDRDKLNKYGRPLLGCTIKPKLGLSAKNYGRAVYECLRGGLDFTKDDENVNSQPFMRWRDRFLFCAEAIYKAQAETGEIKGHYLNATAGTCEEMMKRAVFARELAVPIVMHDYLTGGCNATTSLAHYCRDNGLLLHIQRAMHAVIDRQKNHGMHFRVLAKALRMSGGDHIHAGTVVGKLEGEREITLGFVDLLRDDFIKKDRSRGIYFTQDWVSLPGVLPVASGGIHVWHMPALTEIFGDDSVLQFGGGTLGHPWGNAPGPVANRVALEACVQARNDGRDLAIHGNEIIREACKWSPELAAACEVWKEIKFEFPALDTFV</sequence>
<comment type="function">
    <text evidence="1">RuBisCO catalyzes two reactions: the carboxylation of D-ribulose 1,5-bisphosphate, the primary event in carbon dioxide fixation, as well as the oxidative fragmentation of the pentose substrate in the photorespiration process. Both reactions occur simultaneously and in competition at the same active site.</text>
</comment>
<comment type="catalytic activity">
    <reaction evidence="1">
        <text>2 (2R)-3-phosphoglycerate + 2 H(+) = D-ribulose 1,5-bisphosphate + CO2 + H2O</text>
        <dbReference type="Rhea" id="RHEA:23124"/>
        <dbReference type="ChEBI" id="CHEBI:15377"/>
        <dbReference type="ChEBI" id="CHEBI:15378"/>
        <dbReference type="ChEBI" id="CHEBI:16526"/>
        <dbReference type="ChEBI" id="CHEBI:57870"/>
        <dbReference type="ChEBI" id="CHEBI:58272"/>
        <dbReference type="EC" id="4.1.1.39"/>
    </reaction>
</comment>
<comment type="catalytic activity">
    <reaction evidence="1">
        <text>D-ribulose 1,5-bisphosphate + O2 = 2-phosphoglycolate + (2R)-3-phosphoglycerate + 2 H(+)</text>
        <dbReference type="Rhea" id="RHEA:36631"/>
        <dbReference type="ChEBI" id="CHEBI:15378"/>
        <dbReference type="ChEBI" id="CHEBI:15379"/>
        <dbReference type="ChEBI" id="CHEBI:57870"/>
        <dbReference type="ChEBI" id="CHEBI:58033"/>
        <dbReference type="ChEBI" id="CHEBI:58272"/>
    </reaction>
</comment>
<comment type="cofactor">
    <cofactor evidence="1">
        <name>Mg(2+)</name>
        <dbReference type="ChEBI" id="CHEBI:18420"/>
    </cofactor>
    <text evidence="1">Binds 1 Mg(2+) ion per subunit.</text>
</comment>
<comment type="subunit">
    <text evidence="1">Heterohexadecamer of 8 large chains and 8 small chains; disulfide-linked. The disulfide link is formed within the large subunit homodimers.</text>
</comment>
<comment type="subcellular location">
    <subcellularLocation>
        <location>Plastid</location>
        <location>Chloroplast</location>
    </subcellularLocation>
</comment>
<comment type="PTM">
    <text evidence="1">The disulfide bond which can form in the large chain dimeric partners within the hexadecamer appears to be associated with oxidative stress and protein turnover.</text>
</comment>
<comment type="miscellaneous">
    <text evidence="1">The basic functional RuBisCO is composed of a large chain homodimer in a 'head-to-tail' conformation. In form I RuBisCO this homodimer is arranged in a barrel-like tetramer with the small subunits forming a tetrameric 'cap' on each end of the 'barrel'.</text>
</comment>
<comment type="similarity">
    <text evidence="1">Belongs to the RuBisCO large chain family. Type I subfamily.</text>
</comment>
<feature type="propeptide" id="PRO_0000031133" evidence="1">
    <location>
        <begin position="1"/>
        <end position="2"/>
    </location>
</feature>
<feature type="chain" id="PRO_0000031134" description="Ribulose bisphosphate carboxylase large chain">
    <location>
        <begin position="3"/>
        <end position="476"/>
    </location>
</feature>
<feature type="active site" description="Proton acceptor" evidence="1">
    <location>
        <position position="175"/>
    </location>
</feature>
<feature type="binding site" description="in homodimeric partner" evidence="1">
    <location>
        <position position="123"/>
    </location>
    <ligand>
        <name>substrate</name>
    </ligand>
</feature>
<feature type="binding site" evidence="1">
    <location>
        <position position="173"/>
    </location>
    <ligand>
        <name>substrate</name>
    </ligand>
</feature>
<feature type="binding site" evidence="1">
    <location>
        <position position="177"/>
    </location>
    <ligand>
        <name>substrate</name>
    </ligand>
</feature>
<feature type="binding site" description="via carbamate group" evidence="1">
    <location>
        <position position="201"/>
    </location>
    <ligand>
        <name>Mg(2+)</name>
        <dbReference type="ChEBI" id="CHEBI:18420"/>
    </ligand>
</feature>
<feature type="binding site" evidence="1">
    <location>
        <position position="203"/>
    </location>
    <ligand>
        <name>Mg(2+)</name>
        <dbReference type="ChEBI" id="CHEBI:18420"/>
    </ligand>
</feature>
<feature type="binding site" evidence="1">
    <location>
        <position position="204"/>
    </location>
    <ligand>
        <name>Mg(2+)</name>
        <dbReference type="ChEBI" id="CHEBI:18420"/>
    </ligand>
</feature>
<feature type="binding site" evidence="1">
    <location>
        <position position="295"/>
    </location>
    <ligand>
        <name>substrate</name>
    </ligand>
</feature>
<feature type="binding site" evidence="1">
    <location>
        <position position="327"/>
    </location>
    <ligand>
        <name>substrate</name>
    </ligand>
</feature>
<feature type="binding site" evidence="1">
    <location>
        <position position="379"/>
    </location>
    <ligand>
        <name>substrate</name>
    </ligand>
</feature>
<feature type="site" description="Transition state stabilizer" evidence="1">
    <location>
        <position position="334"/>
    </location>
</feature>
<feature type="modified residue" description="N-acetylproline" evidence="1">
    <location>
        <position position="3"/>
    </location>
</feature>
<feature type="modified residue" description="N6,N6,N6-trimethyllysine" evidence="1">
    <location>
        <position position="14"/>
    </location>
</feature>
<feature type="modified residue" description="N6-carboxylysine" evidence="1">
    <location>
        <position position="201"/>
    </location>
</feature>
<feature type="disulfide bond" description="Interchain; in linked form" evidence="1">
    <location>
        <position position="247"/>
    </location>
</feature>
<protein>
    <recommendedName>
        <fullName evidence="1">Ribulose bisphosphate carboxylase large chain</fullName>
        <shortName evidence="1">RuBisCO large subunit</shortName>
        <ecNumber evidence="1">4.1.1.39</ecNumber>
    </recommendedName>
</protein>
<geneLocation type="chloroplast"/>
<organism>
    <name type="scientific">Barnadesia caryophylla</name>
    <name type="common">Xenophontia caryophylla</name>
    <dbReference type="NCBI Taxonomy" id="4238"/>
    <lineage>
        <taxon>Eukaryota</taxon>
        <taxon>Viridiplantae</taxon>
        <taxon>Streptophyta</taxon>
        <taxon>Embryophyta</taxon>
        <taxon>Tracheophyta</taxon>
        <taxon>Spermatophyta</taxon>
        <taxon>Magnoliopsida</taxon>
        <taxon>eudicotyledons</taxon>
        <taxon>Gunneridae</taxon>
        <taxon>Pentapetalae</taxon>
        <taxon>asterids</taxon>
        <taxon>campanulids</taxon>
        <taxon>Asterales</taxon>
        <taxon>Asteraceae</taxon>
        <taxon>Barnadesioideae</taxon>
        <taxon>Barnadesia</taxon>
    </lineage>
</organism>
<dbReference type="EC" id="4.1.1.39" evidence="1"/>
<dbReference type="EMBL" id="L01887">
    <property type="protein sequence ID" value="AAA84087.1"/>
    <property type="molecule type" value="Genomic_DNA"/>
</dbReference>
<dbReference type="SMR" id="P28381"/>
<dbReference type="GO" id="GO:0009507">
    <property type="term" value="C:chloroplast"/>
    <property type="evidence" value="ECO:0007669"/>
    <property type="project" value="UniProtKB-SubCell"/>
</dbReference>
<dbReference type="GO" id="GO:0000287">
    <property type="term" value="F:magnesium ion binding"/>
    <property type="evidence" value="ECO:0007669"/>
    <property type="project" value="UniProtKB-UniRule"/>
</dbReference>
<dbReference type="GO" id="GO:0004497">
    <property type="term" value="F:monooxygenase activity"/>
    <property type="evidence" value="ECO:0007669"/>
    <property type="project" value="UniProtKB-KW"/>
</dbReference>
<dbReference type="GO" id="GO:0016984">
    <property type="term" value="F:ribulose-bisphosphate carboxylase activity"/>
    <property type="evidence" value="ECO:0007669"/>
    <property type="project" value="UniProtKB-UniRule"/>
</dbReference>
<dbReference type="GO" id="GO:0009853">
    <property type="term" value="P:photorespiration"/>
    <property type="evidence" value="ECO:0007669"/>
    <property type="project" value="UniProtKB-KW"/>
</dbReference>
<dbReference type="GO" id="GO:0019253">
    <property type="term" value="P:reductive pentose-phosphate cycle"/>
    <property type="evidence" value="ECO:0007669"/>
    <property type="project" value="UniProtKB-UniRule"/>
</dbReference>
<dbReference type="CDD" id="cd08212">
    <property type="entry name" value="RuBisCO_large_I"/>
    <property type="match status" value="1"/>
</dbReference>
<dbReference type="FunFam" id="3.20.20.110:FF:000001">
    <property type="entry name" value="Ribulose bisphosphate carboxylase large chain"/>
    <property type="match status" value="1"/>
</dbReference>
<dbReference type="FunFam" id="3.30.70.150:FF:000001">
    <property type="entry name" value="Ribulose bisphosphate carboxylase large chain"/>
    <property type="match status" value="1"/>
</dbReference>
<dbReference type="Gene3D" id="3.20.20.110">
    <property type="entry name" value="Ribulose bisphosphate carboxylase, large subunit, C-terminal domain"/>
    <property type="match status" value="1"/>
</dbReference>
<dbReference type="Gene3D" id="3.30.70.150">
    <property type="entry name" value="RuBisCO large subunit, N-terminal domain"/>
    <property type="match status" value="1"/>
</dbReference>
<dbReference type="HAMAP" id="MF_01338">
    <property type="entry name" value="RuBisCO_L_type1"/>
    <property type="match status" value="1"/>
</dbReference>
<dbReference type="InterPro" id="IPR033966">
    <property type="entry name" value="RuBisCO"/>
</dbReference>
<dbReference type="InterPro" id="IPR020878">
    <property type="entry name" value="RuBisCo_large_chain_AS"/>
</dbReference>
<dbReference type="InterPro" id="IPR000685">
    <property type="entry name" value="RuBisCO_lsu_C"/>
</dbReference>
<dbReference type="InterPro" id="IPR036376">
    <property type="entry name" value="RuBisCO_lsu_C_sf"/>
</dbReference>
<dbReference type="InterPro" id="IPR017443">
    <property type="entry name" value="RuBisCO_lsu_fd_N"/>
</dbReference>
<dbReference type="InterPro" id="IPR036422">
    <property type="entry name" value="RuBisCO_lsu_N_sf"/>
</dbReference>
<dbReference type="InterPro" id="IPR020888">
    <property type="entry name" value="RuBisCO_lsuI"/>
</dbReference>
<dbReference type="NCBIfam" id="NF003252">
    <property type="entry name" value="PRK04208.1"/>
    <property type="match status" value="1"/>
</dbReference>
<dbReference type="PANTHER" id="PTHR42704">
    <property type="entry name" value="RIBULOSE BISPHOSPHATE CARBOXYLASE"/>
    <property type="match status" value="1"/>
</dbReference>
<dbReference type="PANTHER" id="PTHR42704:SF15">
    <property type="entry name" value="RIBULOSE BISPHOSPHATE CARBOXYLASE LARGE CHAIN"/>
    <property type="match status" value="1"/>
</dbReference>
<dbReference type="Pfam" id="PF00016">
    <property type="entry name" value="RuBisCO_large"/>
    <property type="match status" value="1"/>
</dbReference>
<dbReference type="Pfam" id="PF02788">
    <property type="entry name" value="RuBisCO_large_N"/>
    <property type="match status" value="1"/>
</dbReference>
<dbReference type="SUPFAM" id="SSF51649">
    <property type="entry name" value="RuBisCo, C-terminal domain"/>
    <property type="match status" value="1"/>
</dbReference>
<dbReference type="SUPFAM" id="SSF54966">
    <property type="entry name" value="RuBisCO, large subunit, small (N-terminal) domain"/>
    <property type="match status" value="1"/>
</dbReference>
<dbReference type="PROSITE" id="PS00157">
    <property type="entry name" value="RUBISCO_LARGE"/>
    <property type="match status" value="1"/>
</dbReference>
<keyword id="KW-0007">Acetylation</keyword>
<keyword id="KW-0113">Calvin cycle</keyword>
<keyword id="KW-0120">Carbon dioxide fixation</keyword>
<keyword id="KW-0150">Chloroplast</keyword>
<keyword id="KW-1015">Disulfide bond</keyword>
<keyword id="KW-0456">Lyase</keyword>
<keyword id="KW-0460">Magnesium</keyword>
<keyword id="KW-0479">Metal-binding</keyword>
<keyword id="KW-0488">Methylation</keyword>
<keyword id="KW-0503">Monooxygenase</keyword>
<keyword id="KW-0560">Oxidoreductase</keyword>
<keyword id="KW-0601">Photorespiration</keyword>
<keyword id="KW-0602">Photosynthesis</keyword>
<keyword id="KW-0934">Plastid</keyword>
<gene>
    <name evidence="1" type="primary">rbcL</name>
</gene>
<accession>P28381</accession>
<proteinExistence type="inferred from homology"/>
<name>RBL_BARCA</name>
<evidence type="ECO:0000255" key="1">
    <source>
        <dbReference type="HAMAP-Rule" id="MF_01338"/>
    </source>
</evidence>